<accession>Q4L783</accession>
<keyword id="KW-1003">Cell membrane</keyword>
<keyword id="KW-0472">Membrane</keyword>
<keyword id="KW-0812">Transmembrane</keyword>
<keyword id="KW-1133">Transmembrane helix</keyword>
<reference key="1">
    <citation type="journal article" date="2005" name="J. Bacteriol.">
        <title>Whole-genome sequencing of Staphylococcus haemolyticus uncovers the extreme plasticity of its genome and the evolution of human-colonizing staphylococcal species.</title>
        <authorList>
            <person name="Takeuchi F."/>
            <person name="Watanabe S."/>
            <person name="Baba T."/>
            <person name="Yuzawa H."/>
            <person name="Ito T."/>
            <person name="Morimoto Y."/>
            <person name="Kuroda M."/>
            <person name="Cui L."/>
            <person name="Takahashi M."/>
            <person name="Ankai A."/>
            <person name="Baba S."/>
            <person name="Fukui S."/>
            <person name="Lee J.C."/>
            <person name="Hiramatsu K."/>
        </authorList>
    </citation>
    <scope>NUCLEOTIDE SEQUENCE [LARGE SCALE GENOMIC DNA]</scope>
    <source>
        <strain>JCSC1435</strain>
    </source>
</reference>
<gene>
    <name type="ordered locus">SH1183</name>
</gene>
<feature type="chain" id="PRO_0000299443" description="UPF0478 protein SH1183">
    <location>
        <begin position="1"/>
        <end position="168"/>
    </location>
</feature>
<feature type="transmembrane region" description="Helical" evidence="1">
    <location>
        <begin position="7"/>
        <end position="27"/>
    </location>
</feature>
<feature type="region of interest" description="Disordered" evidence="2">
    <location>
        <begin position="144"/>
        <end position="168"/>
    </location>
</feature>
<protein>
    <recommendedName>
        <fullName>UPF0478 protein SH1183</fullName>
    </recommendedName>
</protein>
<proteinExistence type="inferred from homology"/>
<name>Y1183_STAHJ</name>
<organism>
    <name type="scientific">Staphylococcus haemolyticus (strain JCSC1435)</name>
    <dbReference type="NCBI Taxonomy" id="279808"/>
    <lineage>
        <taxon>Bacteria</taxon>
        <taxon>Bacillati</taxon>
        <taxon>Bacillota</taxon>
        <taxon>Bacilli</taxon>
        <taxon>Bacillales</taxon>
        <taxon>Staphylococcaceae</taxon>
        <taxon>Staphylococcus</taxon>
    </lineage>
</organism>
<sequence>MDWILPIAGIIAAIAFLVLCIGIVVVLISVKKNLDHVAKTLDGVEGQVQGITRETTDLLHKANRLTEDIQGKVERLNSVVDGVKGIGDSVQNLNGSVDRVTNSITHNISQNEDKISQVVQWSNVAMEIADKWQNRHYRRGSANYRNTSVGNDANHSNENYTTNVEKNF</sequence>
<evidence type="ECO:0000255" key="1"/>
<evidence type="ECO:0000256" key="2">
    <source>
        <dbReference type="SAM" id="MobiDB-lite"/>
    </source>
</evidence>
<evidence type="ECO:0000305" key="3"/>
<comment type="subcellular location">
    <subcellularLocation>
        <location evidence="3">Cell membrane</location>
        <topology evidence="3">Single-pass membrane protein</topology>
    </subcellularLocation>
</comment>
<comment type="similarity">
    <text evidence="3">Belongs to the UPF0478 family.</text>
</comment>
<dbReference type="EMBL" id="AP006716">
    <property type="protein sequence ID" value="BAE04492.1"/>
    <property type="molecule type" value="Genomic_DNA"/>
</dbReference>
<dbReference type="RefSeq" id="WP_011275484.1">
    <property type="nucleotide sequence ID" value="NC_007168.1"/>
</dbReference>
<dbReference type="SMR" id="Q4L783"/>
<dbReference type="KEGG" id="sha:SH1183"/>
<dbReference type="eggNOG" id="COG4768">
    <property type="taxonomic scope" value="Bacteria"/>
</dbReference>
<dbReference type="HOGENOM" id="CLU_115870_0_0_9"/>
<dbReference type="OrthoDB" id="2366030at2"/>
<dbReference type="Proteomes" id="UP000000543">
    <property type="component" value="Chromosome"/>
</dbReference>
<dbReference type="GO" id="GO:0005886">
    <property type="term" value="C:plasma membrane"/>
    <property type="evidence" value="ECO:0007669"/>
    <property type="project" value="UniProtKB-SubCell"/>
</dbReference>
<dbReference type="InterPro" id="IPR009293">
    <property type="entry name" value="UPF0478"/>
</dbReference>
<dbReference type="PANTHER" id="PTHR40070">
    <property type="entry name" value="UPF0478 PROTEIN YTXG"/>
    <property type="match status" value="1"/>
</dbReference>
<dbReference type="PANTHER" id="PTHR40070:SF1">
    <property type="entry name" value="UPF0478 PROTEIN YTXG"/>
    <property type="match status" value="1"/>
</dbReference>
<dbReference type="Pfam" id="PF06103">
    <property type="entry name" value="DUF948"/>
    <property type="match status" value="1"/>
</dbReference>
<dbReference type="SUPFAM" id="SSF58104">
    <property type="entry name" value="Methyl-accepting chemotaxis protein (MCP) signaling domain"/>
    <property type="match status" value="1"/>
</dbReference>